<reference key="1">
    <citation type="journal article" date="2003" name="Nucleic Acids Res.">
        <title>Genome sequence of Chlamydophila caviae (Chlamydia psittaci GPIC): examining the role of niche-specific genes in the evolution of the Chlamydiaceae.</title>
        <authorList>
            <person name="Read T.D."/>
            <person name="Myers G.S.A."/>
            <person name="Brunham R.C."/>
            <person name="Nelson W.C."/>
            <person name="Paulsen I.T."/>
            <person name="Heidelberg J.F."/>
            <person name="Holtzapple E.K."/>
            <person name="Khouri H.M."/>
            <person name="Federova N.B."/>
            <person name="Carty H.A."/>
            <person name="Umayam L.A."/>
            <person name="Haft D.H."/>
            <person name="Peterson J.D."/>
            <person name="Beanan M.J."/>
            <person name="White O."/>
            <person name="Salzberg S.L."/>
            <person name="Hsia R.-C."/>
            <person name="McClarty G."/>
            <person name="Rank R.G."/>
            <person name="Bavoil P.M."/>
            <person name="Fraser C.M."/>
        </authorList>
    </citation>
    <scope>NUCLEOTIDE SEQUENCE [LARGE SCALE GENOMIC DNA]</scope>
    <source>
        <strain>ATCC VR-813 / DSM 19441 / 03DC25 / GPIC</strain>
    </source>
</reference>
<name>PYRE_CHLCV</name>
<proteinExistence type="inferred from homology"/>
<organism>
    <name type="scientific">Chlamydia caviae (strain ATCC VR-813 / DSM 19441 / 03DC25 / GPIC)</name>
    <name type="common">Chlamydophila caviae</name>
    <dbReference type="NCBI Taxonomy" id="227941"/>
    <lineage>
        <taxon>Bacteria</taxon>
        <taxon>Pseudomonadati</taxon>
        <taxon>Chlamydiota</taxon>
        <taxon>Chlamydiia</taxon>
        <taxon>Chlamydiales</taxon>
        <taxon>Chlamydiaceae</taxon>
        <taxon>Chlamydia/Chlamydophila group</taxon>
        <taxon>Chlamydia</taxon>
    </lineage>
</organism>
<keyword id="KW-0328">Glycosyltransferase</keyword>
<keyword id="KW-0460">Magnesium</keyword>
<keyword id="KW-0665">Pyrimidine biosynthesis</keyword>
<keyword id="KW-0808">Transferase</keyword>
<protein>
    <recommendedName>
        <fullName evidence="1">Orotate phosphoribosyltransferase</fullName>
        <shortName evidence="1">OPRT</shortName>
        <shortName evidence="1">OPRTase</shortName>
        <ecNumber evidence="1">2.4.2.10</ecNumber>
    </recommendedName>
</protein>
<sequence>MMSFEEEQLRDHAVVNLYRIGAIRFGDFILSDGKKTPIYVDMRLVISCPDVLQTIASLIWRLRPSFNSSLLCGVPYTALTLATCISLKYNISMVLRRKELKHPNQEDKIKVEGLFSPGQTCLVINDVIASGRSILDTAKALEDEGLNIRESLVFLDRQVGGADALKEAGIKLRSVFTLEELVKALLSKCQLSETDAAIARTLLETF</sequence>
<comment type="function">
    <text evidence="1">Catalyzes the transfer of a ribosyl phosphate group from 5-phosphoribose 1-diphosphate to orotate, leading to the formation of orotidine monophosphate (OMP).</text>
</comment>
<comment type="catalytic activity">
    <reaction evidence="1">
        <text>orotidine 5'-phosphate + diphosphate = orotate + 5-phospho-alpha-D-ribose 1-diphosphate</text>
        <dbReference type="Rhea" id="RHEA:10380"/>
        <dbReference type="ChEBI" id="CHEBI:30839"/>
        <dbReference type="ChEBI" id="CHEBI:33019"/>
        <dbReference type="ChEBI" id="CHEBI:57538"/>
        <dbReference type="ChEBI" id="CHEBI:58017"/>
        <dbReference type="EC" id="2.4.2.10"/>
    </reaction>
</comment>
<comment type="cofactor">
    <cofactor evidence="1">
        <name>Mg(2+)</name>
        <dbReference type="ChEBI" id="CHEBI:18420"/>
    </cofactor>
</comment>
<comment type="pathway">
    <text evidence="1">Pyrimidine metabolism; UMP biosynthesis via de novo pathway; UMP from orotate: step 1/2.</text>
</comment>
<comment type="subunit">
    <text evidence="1">Homodimer.</text>
</comment>
<comment type="similarity">
    <text evidence="1">Belongs to the purine/pyrimidine phosphoribosyltransferase family. PyrE subfamily.</text>
</comment>
<dbReference type="EC" id="2.4.2.10" evidence="1"/>
<dbReference type="EMBL" id="AE015925">
    <property type="protein sequence ID" value="AAP04884.1"/>
    <property type="molecule type" value="Genomic_DNA"/>
</dbReference>
<dbReference type="RefSeq" id="WP_011006105.1">
    <property type="nucleotide sequence ID" value="NC_003361.3"/>
</dbReference>
<dbReference type="SMR" id="Q824L3"/>
<dbReference type="STRING" id="227941.CCA_00132"/>
<dbReference type="KEGG" id="cca:CCA_00132"/>
<dbReference type="eggNOG" id="COG0461">
    <property type="taxonomic scope" value="Bacteria"/>
</dbReference>
<dbReference type="HOGENOM" id="CLU_074878_2_0_0"/>
<dbReference type="OrthoDB" id="9802134at2"/>
<dbReference type="UniPathway" id="UPA00070">
    <property type="reaction ID" value="UER00119"/>
</dbReference>
<dbReference type="Proteomes" id="UP000002193">
    <property type="component" value="Chromosome"/>
</dbReference>
<dbReference type="GO" id="GO:0000287">
    <property type="term" value="F:magnesium ion binding"/>
    <property type="evidence" value="ECO:0007669"/>
    <property type="project" value="UniProtKB-UniRule"/>
</dbReference>
<dbReference type="GO" id="GO:0004588">
    <property type="term" value="F:orotate phosphoribosyltransferase activity"/>
    <property type="evidence" value="ECO:0007669"/>
    <property type="project" value="UniProtKB-UniRule"/>
</dbReference>
<dbReference type="GO" id="GO:0004590">
    <property type="term" value="F:orotidine-5'-phosphate decarboxylase activity"/>
    <property type="evidence" value="ECO:0007669"/>
    <property type="project" value="TreeGrafter"/>
</dbReference>
<dbReference type="GO" id="GO:0044205">
    <property type="term" value="P:'de novo' UMP biosynthetic process"/>
    <property type="evidence" value="ECO:0007669"/>
    <property type="project" value="UniProtKB-UniRule"/>
</dbReference>
<dbReference type="GO" id="GO:0019856">
    <property type="term" value="P:pyrimidine nucleobase biosynthetic process"/>
    <property type="evidence" value="ECO:0007669"/>
    <property type="project" value="TreeGrafter"/>
</dbReference>
<dbReference type="CDD" id="cd06223">
    <property type="entry name" value="PRTases_typeI"/>
    <property type="match status" value="1"/>
</dbReference>
<dbReference type="Gene3D" id="3.40.50.2020">
    <property type="match status" value="1"/>
</dbReference>
<dbReference type="HAMAP" id="MF_01208">
    <property type="entry name" value="PyrE"/>
    <property type="match status" value="1"/>
</dbReference>
<dbReference type="InterPro" id="IPR023031">
    <property type="entry name" value="OPRT"/>
</dbReference>
<dbReference type="InterPro" id="IPR000836">
    <property type="entry name" value="PRibTrfase_dom"/>
</dbReference>
<dbReference type="InterPro" id="IPR029057">
    <property type="entry name" value="PRTase-like"/>
</dbReference>
<dbReference type="NCBIfam" id="NF010382">
    <property type="entry name" value="PRK13809.1"/>
    <property type="match status" value="1"/>
</dbReference>
<dbReference type="PANTHER" id="PTHR19278">
    <property type="entry name" value="OROTATE PHOSPHORIBOSYLTRANSFERASE"/>
    <property type="match status" value="1"/>
</dbReference>
<dbReference type="PANTHER" id="PTHR19278:SF9">
    <property type="entry name" value="URIDINE 5'-MONOPHOSPHATE SYNTHASE"/>
    <property type="match status" value="1"/>
</dbReference>
<dbReference type="Pfam" id="PF00156">
    <property type="entry name" value="Pribosyltran"/>
    <property type="match status" value="1"/>
</dbReference>
<dbReference type="SUPFAM" id="SSF53271">
    <property type="entry name" value="PRTase-like"/>
    <property type="match status" value="1"/>
</dbReference>
<evidence type="ECO:0000255" key="1">
    <source>
        <dbReference type="HAMAP-Rule" id="MF_01208"/>
    </source>
</evidence>
<feature type="chain" id="PRO_0000110685" description="Orotate phosphoribosyltransferase">
    <location>
        <begin position="1"/>
        <end position="206"/>
    </location>
</feature>
<feature type="binding site" evidence="1">
    <location>
        <position position="97"/>
    </location>
    <ligand>
        <name>5-phospho-alpha-D-ribose 1-diphosphate</name>
        <dbReference type="ChEBI" id="CHEBI:58017"/>
        <note>ligand shared between dimeric partners</note>
    </ligand>
</feature>
<feature type="binding site" description="in other chain" evidence="1">
    <location>
        <position position="98"/>
    </location>
    <ligand>
        <name>5-phospho-alpha-D-ribose 1-diphosphate</name>
        <dbReference type="ChEBI" id="CHEBI:58017"/>
        <note>ligand shared between dimeric partners</note>
    </ligand>
</feature>
<feature type="binding site" evidence="1">
    <location>
        <position position="101"/>
    </location>
    <ligand>
        <name>5-phospho-alpha-D-ribose 1-diphosphate</name>
        <dbReference type="ChEBI" id="CHEBI:58017"/>
        <note>ligand shared between dimeric partners</note>
    </ligand>
</feature>
<feature type="binding site" description="in other chain" evidence="1">
    <location>
        <begin position="125"/>
        <end position="133"/>
    </location>
    <ligand>
        <name>5-phospho-alpha-D-ribose 1-diphosphate</name>
        <dbReference type="ChEBI" id="CHEBI:58017"/>
        <note>ligand shared between dimeric partners</note>
    </ligand>
</feature>
<feature type="binding site" evidence="1">
    <location>
        <position position="157"/>
    </location>
    <ligand>
        <name>orotate</name>
        <dbReference type="ChEBI" id="CHEBI:30839"/>
    </ligand>
</feature>
<gene>
    <name evidence="1" type="primary">pyrE</name>
    <name type="ordered locus">CCA_00132</name>
</gene>
<accession>Q824L3</accession>